<protein>
    <recommendedName>
        <fullName>Ribosome biogenesis protein BRX1 homolog</fullName>
    </recommendedName>
    <alternativeName>
        <fullName>Brix domain-containing protein 2</fullName>
    </alternativeName>
</protein>
<reference key="1">
    <citation type="journal article" date="2004" name="Genome Res.">
        <title>The status, quality, and expansion of the NIH full-length cDNA project: the Mammalian Gene Collection (MGC).</title>
        <authorList>
            <consortium name="The MGC Project Team"/>
        </authorList>
    </citation>
    <scope>NUCLEOTIDE SEQUENCE [LARGE SCALE MRNA]</scope>
    <source>
        <tissue>Testis</tissue>
    </source>
</reference>
<feature type="chain" id="PRO_0000269726" description="Ribosome biogenesis protein BRX1 homolog">
    <location>
        <begin position="1"/>
        <end position="352"/>
    </location>
</feature>
<feature type="domain" description="Brix" evidence="3">
    <location>
        <begin position="59"/>
        <end position="248"/>
    </location>
</feature>
<feature type="region of interest" description="Disordered" evidence="4">
    <location>
        <begin position="1"/>
        <end position="47"/>
    </location>
</feature>
<feature type="region of interest" description="Disordered" evidence="4">
    <location>
        <begin position="281"/>
        <end position="301"/>
    </location>
</feature>
<feature type="compositionally biased region" description="Basic and acidic residues" evidence="4">
    <location>
        <begin position="34"/>
        <end position="46"/>
    </location>
</feature>
<feature type="modified residue" description="Phosphoserine" evidence="2">
    <location>
        <position position="260"/>
    </location>
</feature>
<feature type="modified residue" description="N6-acetyllysine" evidence="2">
    <location>
        <position position="275"/>
    </location>
</feature>
<feature type="cross-link" description="Glycyl lysine isopeptide (Lys-Gly) (interchain with G-Cter in SUMO2)" evidence="2">
    <location>
        <position position="159"/>
    </location>
</feature>
<feature type="cross-link" description="Glycyl lysine isopeptide (Lys-Gly) (interchain with G-Cter in SUMO2)" evidence="2">
    <location>
        <position position="313"/>
    </location>
</feature>
<feature type="cross-link" description="Glycyl lysine isopeptide (Lys-Gly) (interchain with G-Cter in SUMO2)" evidence="2">
    <location>
        <position position="321"/>
    </location>
</feature>
<gene>
    <name type="primary">Brix1</name>
    <name type="synonym">Brix</name>
    <name type="synonym">Bxdc2</name>
</gene>
<keyword id="KW-0007">Acetylation</keyword>
<keyword id="KW-1017">Isopeptide bond</keyword>
<keyword id="KW-0539">Nucleus</keyword>
<keyword id="KW-0597">Phosphoprotein</keyword>
<keyword id="KW-1185">Reference proteome</keyword>
<keyword id="KW-0690">Ribosome biogenesis</keyword>
<keyword id="KW-0832">Ubl conjugation</keyword>
<sequence>MAATKRKRRGDLEVQAKKPKKNRKDAGQPAKQADVAKEAEEEKDRIPGPVCKGKWKNKERILIFSSRGINFRTRHLMQDLRMLMPHSKADTKMDRKDKLFVINEVCEMKNCNKCIYFEAKKKQDLYMWLSNSPHGPSAKFLVQNIHTLAELKMTGNCLKGSRPLLSFDPAFDDLPHYALLKEFLIQIFSTPRYHPKSQPFVDHVFTFTILDNRIWFRNFQIIEEDAALVEIGPRFVLNLIKIFQGSFGGPTLYENPHYQSPNMHRRVVRSITAAKYREKQQVKDVQKSRKKEPKTILPHDPTADVFVTPAEEKPIEVQWVKPEPKVDLKARKRRIYKRHRKLQQKMSRGGAK</sequence>
<name>BRX1_RAT</name>
<organism>
    <name type="scientific">Rattus norvegicus</name>
    <name type="common">Rat</name>
    <dbReference type="NCBI Taxonomy" id="10116"/>
    <lineage>
        <taxon>Eukaryota</taxon>
        <taxon>Metazoa</taxon>
        <taxon>Chordata</taxon>
        <taxon>Craniata</taxon>
        <taxon>Vertebrata</taxon>
        <taxon>Euteleostomi</taxon>
        <taxon>Mammalia</taxon>
        <taxon>Eutheria</taxon>
        <taxon>Euarchontoglires</taxon>
        <taxon>Glires</taxon>
        <taxon>Rodentia</taxon>
        <taxon>Myomorpha</taxon>
        <taxon>Muroidea</taxon>
        <taxon>Muridae</taxon>
        <taxon>Murinae</taxon>
        <taxon>Rattus</taxon>
    </lineage>
</organism>
<comment type="function">
    <text evidence="1">Required for biogenesis of the 60S ribosomal subunit.</text>
</comment>
<comment type="subcellular location">
    <subcellularLocation>
        <location evidence="1">Nucleus</location>
        <location evidence="1">Nucleolus</location>
    </subcellularLocation>
</comment>
<comment type="similarity">
    <text evidence="5">Belongs to the BRX1 family.</text>
</comment>
<accession>Q4QQT6</accession>
<proteinExistence type="evidence at transcript level"/>
<evidence type="ECO:0000250" key="1"/>
<evidence type="ECO:0000250" key="2">
    <source>
        <dbReference type="UniProtKB" id="Q8TDN6"/>
    </source>
</evidence>
<evidence type="ECO:0000255" key="3">
    <source>
        <dbReference type="PROSITE-ProRule" id="PRU00034"/>
    </source>
</evidence>
<evidence type="ECO:0000256" key="4">
    <source>
        <dbReference type="SAM" id="MobiDB-lite"/>
    </source>
</evidence>
<evidence type="ECO:0000305" key="5"/>
<dbReference type="EMBL" id="BC098005">
    <property type="protein sequence ID" value="AAH98005.1"/>
    <property type="molecule type" value="mRNA"/>
</dbReference>
<dbReference type="RefSeq" id="NP_001025086.1">
    <property type="nucleotide sequence ID" value="NM_001029915.1"/>
</dbReference>
<dbReference type="SMR" id="Q4QQT6"/>
<dbReference type="FunCoup" id="Q4QQT6">
    <property type="interactions" value="2823"/>
</dbReference>
<dbReference type="STRING" id="10116.ENSRNOP00000024285"/>
<dbReference type="GlyGen" id="Q4QQT6">
    <property type="glycosylation" value="1 site"/>
</dbReference>
<dbReference type="PhosphoSitePlus" id="Q4QQT6"/>
<dbReference type="jPOST" id="Q4QQT6"/>
<dbReference type="PaxDb" id="10116-ENSRNOP00000024285"/>
<dbReference type="GeneID" id="294799"/>
<dbReference type="KEGG" id="rno:294799"/>
<dbReference type="AGR" id="RGD:1308508"/>
<dbReference type="CTD" id="55299"/>
<dbReference type="RGD" id="1308508">
    <property type="gene designation" value="Brix1"/>
</dbReference>
<dbReference type="eggNOG" id="KOG2971">
    <property type="taxonomic scope" value="Eukaryota"/>
</dbReference>
<dbReference type="InParanoid" id="Q4QQT6"/>
<dbReference type="OrthoDB" id="10595at9989"/>
<dbReference type="PhylomeDB" id="Q4QQT6"/>
<dbReference type="PRO" id="PR:Q4QQT6"/>
<dbReference type="Proteomes" id="UP000002494">
    <property type="component" value="Unplaced"/>
</dbReference>
<dbReference type="GO" id="GO:0005730">
    <property type="term" value="C:nucleolus"/>
    <property type="evidence" value="ECO:0000318"/>
    <property type="project" value="GO_Central"/>
</dbReference>
<dbReference type="GO" id="GO:0003723">
    <property type="term" value="F:RNA binding"/>
    <property type="evidence" value="ECO:0000318"/>
    <property type="project" value="GO_Central"/>
</dbReference>
<dbReference type="GO" id="GO:0019843">
    <property type="term" value="F:rRNA binding"/>
    <property type="evidence" value="ECO:0007669"/>
    <property type="project" value="InterPro"/>
</dbReference>
<dbReference type="GO" id="GO:0000027">
    <property type="term" value="P:ribosomal large subunit assembly"/>
    <property type="evidence" value="ECO:0000318"/>
    <property type="project" value="GO_Central"/>
</dbReference>
<dbReference type="GO" id="GO:0006364">
    <property type="term" value="P:rRNA processing"/>
    <property type="evidence" value="ECO:0007669"/>
    <property type="project" value="InterPro"/>
</dbReference>
<dbReference type="FunFam" id="3.40.50.10480:FF:000003">
    <property type="entry name" value="Ribosome biogenesis protein BRX1"/>
    <property type="match status" value="1"/>
</dbReference>
<dbReference type="Gene3D" id="3.40.50.10480">
    <property type="entry name" value="Probable brix-domain ribosomal biogenesis protein"/>
    <property type="match status" value="1"/>
</dbReference>
<dbReference type="InterPro" id="IPR007109">
    <property type="entry name" value="Brix"/>
</dbReference>
<dbReference type="InterPro" id="IPR026532">
    <property type="entry name" value="BRX1"/>
</dbReference>
<dbReference type="PANTHER" id="PTHR13634">
    <property type="entry name" value="RIBOSOME BIOGENESIS PROTEIN BRIX"/>
    <property type="match status" value="1"/>
</dbReference>
<dbReference type="PANTHER" id="PTHR13634:SF0">
    <property type="entry name" value="RIBOSOME BIOGENESIS PROTEIN BRX1 HOMOLOG"/>
    <property type="match status" value="1"/>
</dbReference>
<dbReference type="Pfam" id="PF04427">
    <property type="entry name" value="Brix"/>
    <property type="match status" value="1"/>
</dbReference>
<dbReference type="SMART" id="SM00879">
    <property type="entry name" value="Brix"/>
    <property type="match status" value="1"/>
</dbReference>
<dbReference type="SUPFAM" id="SSF52954">
    <property type="entry name" value="Class II aaRS ABD-related"/>
    <property type="match status" value="1"/>
</dbReference>
<dbReference type="PROSITE" id="PS50833">
    <property type="entry name" value="BRIX"/>
    <property type="match status" value="1"/>
</dbReference>